<sequence length="258" mass="28027">MAKRLDLTDVNIYYGSFHAVADVSLAILPRSVTALIGPSGCGKTTVLRTLNRMHEVIPGARVEGAVLLDDQDIYAPGIDPVGVRRAIGMVFQRPNPFPAMSIRNNVVAGLKLQGVRNRKVLDDTAESSLRGANLWDEVKDRLDKPGGGLSGGQQQRLCIARAIAVQPDVLLMDEPCSSLDPISTMAIEDLISELKQQYTIVIVTHNMQQAARVSDQTAFFNLEAVGKPGRLVEIASTEKIFSNPNQKATEDYISGRFG</sequence>
<protein>
    <recommendedName>
        <fullName evidence="1">Phosphate import ATP-binding protein PstB 1</fullName>
        <ecNumber evidence="1">7.3.2.1</ecNumber>
    </recommendedName>
    <alternativeName>
        <fullName evidence="1">ABC phosphate transporter 1</fullName>
    </alternativeName>
    <alternativeName>
        <fullName evidence="1">Phosphate-transporting ATPase 1</fullName>
    </alternativeName>
</protein>
<accession>Q7U172</accession>
<accession>A0A1R3XYM0</accession>
<accession>X2BG54</accession>
<comment type="function">
    <text evidence="1">Part of the ABC transporter complex PstSACB involved in phosphate import. Responsible for energy coupling to the transport system.</text>
</comment>
<comment type="catalytic activity">
    <reaction evidence="1">
        <text>phosphate(out) + ATP + H2O = ADP + 2 phosphate(in) + H(+)</text>
        <dbReference type="Rhea" id="RHEA:24440"/>
        <dbReference type="ChEBI" id="CHEBI:15377"/>
        <dbReference type="ChEBI" id="CHEBI:15378"/>
        <dbReference type="ChEBI" id="CHEBI:30616"/>
        <dbReference type="ChEBI" id="CHEBI:43474"/>
        <dbReference type="ChEBI" id="CHEBI:456216"/>
        <dbReference type="EC" id="7.3.2.1"/>
    </reaction>
</comment>
<comment type="subunit">
    <text evidence="1">The complex is composed of two ATP-binding proteins (PstB), two transmembrane proteins (PstC and PstA) and a solute-binding protein (PstS).</text>
</comment>
<comment type="subcellular location">
    <subcellularLocation>
        <location evidence="1">Cell membrane</location>
        <topology evidence="1">Peripheral membrane protein</topology>
    </subcellularLocation>
</comment>
<comment type="similarity">
    <text evidence="1">Belongs to the ABC transporter superfamily. Phosphate importer (TC 3.A.1.7) family.</text>
</comment>
<feature type="chain" id="PRO_0000092837" description="Phosphate import ATP-binding protein PstB 1">
    <location>
        <begin position="1"/>
        <end position="258"/>
    </location>
</feature>
<feature type="domain" description="ABC transporter" evidence="1">
    <location>
        <begin position="5"/>
        <end position="247"/>
    </location>
</feature>
<feature type="binding site" evidence="1">
    <location>
        <begin position="37"/>
        <end position="44"/>
    </location>
    <ligand>
        <name>ATP</name>
        <dbReference type="ChEBI" id="CHEBI:30616"/>
    </ligand>
</feature>
<gene>
    <name evidence="1" type="primary">pstB1</name>
    <name type="synonym">phoT</name>
    <name type="ordered locus">BQ2027_MB0843</name>
</gene>
<dbReference type="EC" id="7.3.2.1" evidence="1"/>
<dbReference type="EMBL" id="LT708304">
    <property type="protein sequence ID" value="SIT99442.1"/>
    <property type="molecule type" value="Genomic_DNA"/>
</dbReference>
<dbReference type="RefSeq" id="NP_854501.1">
    <property type="nucleotide sequence ID" value="NC_002945.3"/>
</dbReference>
<dbReference type="SMR" id="Q7U172"/>
<dbReference type="KEGG" id="mbo:BQ2027_MB0843"/>
<dbReference type="PATRIC" id="fig|233413.5.peg.916"/>
<dbReference type="Proteomes" id="UP000001419">
    <property type="component" value="Chromosome"/>
</dbReference>
<dbReference type="GO" id="GO:0005886">
    <property type="term" value="C:plasma membrane"/>
    <property type="evidence" value="ECO:0007669"/>
    <property type="project" value="UniProtKB-SubCell"/>
</dbReference>
<dbReference type="GO" id="GO:0005524">
    <property type="term" value="F:ATP binding"/>
    <property type="evidence" value="ECO:0007669"/>
    <property type="project" value="UniProtKB-KW"/>
</dbReference>
<dbReference type="GO" id="GO:0016887">
    <property type="term" value="F:ATP hydrolysis activity"/>
    <property type="evidence" value="ECO:0007669"/>
    <property type="project" value="InterPro"/>
</dbReference>
<dbReference type="GO" id="GO:0015415">
    <property type="term" value="F:ATPase-coupled phosphate ion transmembrane transporter activity"/>
    <property type="evidence" value="ECO:0007669"/>
    <property type="project" value="UniProtKB-EC"/>
</dbReference>
<dbReference type="GO" id="GO:0035435">
    <property type="term" value="P:phosphate ion transmembrane transport"/>
    <property type="evidence" value="ECO:0007669"/>
    <property type="project" value="InterPro"/>
</dbReference>
<dbReference type="CDD" id="cd03260">
    <property type="entry name" value="ABC_PstB_phosphate_transporter"/>
    <property type="match status" value="1"/>
</dbReference>
<dbReference type="FunFam" id="3.40.50.300:FF:000132">
    <property type="entry name" value="Phosphate import ATP-binding protein PstB"/>
    <property type="match status" value="1"/>
</dbReference>
<dbReference type="Gene3D" id="3.40.50.300">
    <property type="entry name" value="P-loop containing nucleotide triphosphate hydrolases"/>
    <property type="match status" value="1"/>
</dbReference>
<dbReference type="InterPro" id="IPR003593">
    <property type="entry name" value="AAA+_ATPase"/>
</dbReference>
<dbReference type="InterPro" id="IPR003439">
    <property type="entry name" value="ABC_transporter-like_ATP-bd"/>
</dbReference>
<dbReference type="InterPro" id="IPR017871">
    <property type="entry name" value="ABC_transporter-like_CS"/>
</dbReference>
<dbReference type="InterPro" id="IPR027417">
    <property type="entry name" value="P-loop_NTPase"/>
</dbReference>
<dbReference type="InterPro" id="IPR005670">
    <property type="entry name" value="PstB-like"/>
</dbReference>
<dbReference type="NCBIfam" id="TIGR00972">
    <property type="entry name" value="3a0107s01c2"/>
    <property type="match status" value="1"/>
</dbReference>
<dbReference type="PANTHER" id="PTHR43423">
    <property type="entry name" value="ABC TRANSPORTER I FAMILY MEMBER 17"/>
    <property type="match status" value="1"/>
</dbReference>
<dbReference type="PANTHER" id="PTHR43423:SF1">
    <property type="entry name" value="ABC TRANSPORTER I FAMILY MEMBER 17"/>
    <property type="match status" value="1"/>
</dbReference>
<dbReference type="Pfam" id="PF00005">
    <property type="entry name" value="ABC_tran"/>
    <property type="match status" value="1"/>
</dbReference>
<dbReference type="SMART" id="SM00382">
    <property type="entry name" value="AAA"/>
    <property type="match status" value="1"/>
</dbReference>
<dbReference type="SUPFAM" id="SSF52540">
    <property type="entry name" value="P-loop containing nucleoside triphosphate hydrolases"/>
    <property type="match status" value="1"/>
</dbReference>
<dbReference type="PROSITE" id="PS00211">
    <property type="entry name" value="ABC_TRANSPORTER_1"/>
    <property type="match status" value="1"/>
</dbReference>
<dbReference type="PROSITE" id="PS50893">
    <property type="entry name" value="ABC_TRANSPORTER_2"/>
    <property type="match status" value="1"/>
</dbReference>
<dbReference type="PROSITE" id="PS51238">
    <property type="entry name" value="PSTB"/>
    <property type="match status" value="1"/>
</dbReference>
<reference key="1">
    <citation type="journal article" date="2003" name="Proc. Natl. Acad. Sci. U.S.A.">
        <title>The complete genome sequence of Mycobacterium bovis.</title>
        <authorList>
            <person name="Garnier T."/>
            <person name="Eiglmeier K."/>
            <person name="Camus J.-C."/>
            <person name="Medina N."/>
            <person name="Mansoor H."/>
            <person name="Pryor M."/>
            <person name="Duthoy S."/>
            <person name="Grondin S."/>
            <person name="Lacroix C."/>
            <person name="Monsempe C."/>
            <person name="Simon S."/>
            <person name="Harris B."/>
            <person name="Atkin R."/>
            <person name="Doggett J."/>
            <person name="Mayes R."/>
            <person name="Keating L."/>
            <person name="Wheeler P.R."/>
            <person name="Parkhill J."/>
            <person name="Barrell B.G."/>
            <person name="Cole S.T."/>
            <person name="Gordon S.V."/>
            <person name="Hewinson R.G."/>
        </authorList>
    </citation>
    <scope>NUCLEOTIDE SEQUENCE [LARGE SCALE GENOMIC DNA]</scope>
    <source>
        <strain>ATCC BAA-935 / AF2122/97</strain>
    </source>
</reference>
<reference key="2">
    <citation type="journal article" date="2017" name="Genome Announc.">
        <title>Updated reference genome sequence and annotation of Mycobacterium bovis AF2122/97.</title>
        <authorList>
            <person name="Malone K.M."/>
            <person name="Farrell D."/>
            <person name="Stuber T.P."/>
            <person name="Schubert O.T."/>
            <person name="Aebersold R."/>
            <person name="Robbe-Austerman S."/>
            <person name="Gordon S.V."/>
        </authorList>
    </citation>
    <scope>NUCLEOTIDE SEQUENCE [LARGE SCALE GENOMIC DNA]</scope>
    <scope>GENOME REANNOTATION</scope>
    <source>
        <strain>ATCC BAA-935 / AF2122/97</strain>
    </source>
</reference>
<evidence type="ECO:0000255" key="1">
    <source>
        <dbReference type="HAMAP-Rule" id="MF_01702"/>
    </source>
</evidence>
<proteinExistence type="inferred from homology"/>
<organism>
    <name type="scientific">Mycobacterium bovis (strain ATCC BAA-935 / AF2122/97)</name>
    <dbReference type="NCBI Taxonomy" id="233413"/>
    <lineage>
        <taxon>Bacteria</taxon>
        <taxon>Bacillati</taxon>
        <taxon>Actinomycetota</taxon>
        <taxon>Actinomycetes</taxon>
        <taxon>Mycobacteriales</taxon>
        <taxon>Mycobacteriaceae</taxon>
        <taxon>Mycobacterium</taxon>
        <taxon>Mycobacterium tuberculosis complex</taxon>
    </lineage>
</organism>
<name>PSTB1_MYCBO</name>
<keyword id="KW-0067">ATP-binding</keyword>
<keyword id="KW-1003">Cell membrane</keyword>
<keyword id="KW-0472">Membrane</keyword>
<keyword id="KW-0547">Nucleotide-binding</keyword>
<keyword id="KW-0592">Phosphate transport</keyword>
<keyword id="KW-1185">Reference proteome</keyword>
<keyword id="KW-1278">Translocase</keyword>
<keyword id="KW-0813">Transport</keyword>